<protein>
    <recommendedName>
        <fullName evidence="1">tRNA-specific 2-thiouridylase MnmA</fullName>
        <ecNumber evidence="1">2.8.1.13</ecNumber>
    </recommendedName>
</protein>
<reference key="1">
    <citation type="journal article" date="2009" name="PLoS ONE">
        <title>Genome analysis of the anaerobic thermohalophilic bacterium Halothermothrix orenii.</title>
        <authorList>
            <person name="Mavromatis K."/>
            <person name="Ivanova N."/>
            <person name="Anderson I."/>
            <person name="Lykidis A."/>
            <person name="Hooper S.D."/>
            <person name="Sun H."/>
            <person name="Kunin V."/>
            <person name="Lapidus A."/>
            <person name="Hugenholtz P."/>
            <person name="Patel B."/>
            <person name="Kyrpides N.C."/>
        </authorList>
    </citation>
    <scope>NUCLEOTIDE SEQUENCE [LARGE SCALE GENOMIC DNA]</scope>
    <source>
        <strain>H 168 / OCM 544 / DSM 9562</strain>
    </source>
</reference>
<keyword id="KW-0067">ATP-binding</keyword>
<keyword id="KW-0963">Cytoplasm</keyword>
<keyword id="KW-1015">Disulfide bond</keyword>
<keyword id="KW-0547">Nucleotide-binding</keyword>
<keyword id="KW-1185">Reference proteome</keyword>
<keyword id="KW-0694">RNA-binding</keyword>
<keyword id="KW-0808">Transferase</keyword>
<keyword id="KW-0819">tRNA processing</keyword>
<keyword id="KW-0820">tRNA-binding</keyword>
<dbReference type="EC" id="2.8.1.13" evidence="1"/>
<dbReference type="EMBL" id="CP001098">
    <property type="protein sequence ID" value="ACL69646.1"/>
    <property type="molecule type" value="Genomic_DNA"/>
</dbReference>
<dbReference type="RefSeq" id="WP_012635833.1">
    <property type="nucleotide sequence ID" value="NC_011899.1"/>
</dbReference>
<dbReference type="SMR" id="B8CWH7"/>
<dbReference type="STRING" id="373903.Hore_08900"/>
<dbReference type="KEGG" id="hor:Hore_08900"/>
<dbReference type="eggNOG" id="COG0482">
    <property type="taxonomic scope" value="Bacteria"/>
</dbReference>
<dbReference type="HOGENOM" id="CLU_035188_0_0_9"/>
<dbReference type="OrthoDB" id="9800696at2"/>
<dbReference type="Proteomes" id="UP000000719">
    <property type="component" value="Chromosome"/>
</dbReference>
<dbReference type="GO" id="GO:0005737">
    <property type="term" value="C:cytoplasm"/>
    <property type="evidence" value="ECO:0007669"/>
    <property type="project" value="UniProtKB-SubCell"/>
</dbReference>
<dbReference type="GO" id="GO:0005524">
    <property type="term" value="F:ATP binding"/>
    <property type="evidence" value="ECO:0007669"/>
    <property type="project" value="UniProtKB-KW"/>
</dbReference>
<dbReference type="GO" id="GO:0000049">
    <property type="term" value="F:tRNA binding"/>
    <property type="evidence" value="ECO:0007669"/>
    <property type="project" value="UniProtKB-KW"/>
</dbReference>
<dbReference type="GO" id="GO:0103016">
    <property type="term" value="F:tRNA-uridine 2-sulfurtransferase activity"/>
    <property type="evidence" value="ECO:0007669"/>
    <property type="project" value="UniProtKB-EC"/>
</dbReference>
<dbReference type="GO" id="GO:0002143">
    <property type="term" value="P:tRNA wobble position uridine thiolation"/>
    <property type="evidence" value="ECO:0007669"/>
    <property type="project" value="TreeGrafter"/>
</dbReference>
<dbReference type="CDD" id="cd01998">
    <property type="entry name" value="MnmA_TRMU-like"/>
    <property type="match status" value="1"/>
</dbReference>
<dbReference type="FunFam" id="2.30.30.280:FF:000001">
    <property type="entry name" value="tRNA-specific 2-thiouridylase MnmA"/>
    <property type="match status" value="1"/>
</dbReference>
<dbReference type="FunFam" id="2.40.30.10:FF:000023">
    <property type="entry name" value="tRNA-specific 2-thiouridylase MnmA"/>
    <property type="match status" value="1"/>
</dbReference>
<dbReference type="FunFam" id="3.40.50.620:FF:000115">
    <property type="entry name" value="tRNA-specific 2-thiouridylase MnmA"/>
    <property type="match status" value="1"/>
</dbReference>
<dbReference type="Gene3D" id="2.30.30.280">
    <property type="entry name" value="Adenine nucleotide alpha hydrolases-like domains"/>
    <property type="match status" value="1"/>
</dbReference>
<dbReference type="Gene3D" id="3.40.50.620">
    <property type="entry name" value="HUPs"/>
    <property type="match status" value="1"/>
</dbReference>
<dbReference type="Gene3D" id="2.40.30.10">
    <property type="entry name" value="Translation factors"/>
    <property type="match status" value="1"/>
</dbReference>
<dbReference type="HAMAP" id="MF_00144">
    <property type="entry name" value="tRNA_thiouridyl_MnmA"/>
    <property type="match status" value="1"/>
</dbReference>
<dbReference type="InterPro" id="IPR004506">
    <property type="entry name" value="MnmA-like"/>
</dbReference>
<dbReference type="InterPro" id="IPR046885">
    <property type="entry name" value="MnmA-like_C"/>
</dbReference>
<dbReference type="InterPro" id="IPR046884">
    <property type="entry name" value="MnmA-like_central"/>
</dbReference>
<dbReference type="InterPro" id="IPR023382">
    <property type="entry name" value="MnmA-like_central_sf"/>
</dbReference>
<dbReference type="InterPro" id="IPR014729">
    <property type="entry name" value="Rossmann-like_a/b/a_fold"/>
</dbReference>
<dbReference type="NCBIfam" id="NF001138">
    <property type="entry name" value="PRK00143.1"/>
    <property type="match status" value="1"/>
</dbReference>
<dbReference type="NCBIfam" id="TIGR00420">
    <property type="entry name" value="trmU"/>
    <property type="match status" value="1"/>
</dbReference>
<dbReference type="PANTHER" id="PTHR11933:SF5">
    <property type="entry name" value="MITOCHONDRIAL TRNA-SPECIFIC 2-THIOURIDYLASE 1"/>
    <property type="match status" value="1"/>
</dbReference>
<dbReference type="PANTHER" id="PTHR11933">
    <property type="entry name" value="TRNA 5-METHYLAMINOMETHYL-2-THIOURIDYLATE -METHYLTRANSFERASE"/>
    <property type="match status" value="1"/>
</dbReference>
<dbReference type="Pfam" id="PF03054">
    <property type="entry name" value="tRNA_Me_trans"/>
    <property type="match status" value="1"/>
</dbReference>
<dbReference type="Pfam" id="PF20258">
    <property type="entry name" value="tRNA_Me_trans_C"/>
    <property type="match status" value="1"/>
</dbReference>
<dbReference type="Pfam" id="PF20259">
    <property type="entry name" value="tRNA_Me_trans_M"/>
    <property type="match status" value="1"/>
</dbReference>
<dbReference type="SUPFAM" id="SSF52402">
    <property type="entry name" value="Adenine nucleotide alpha hydrolases-like"/>
    <property type="match status" value="1"/>
</dbReference>
<accession>B8CWH7</accession>
<evidence type="ECO:0000255" key="1">
    <source>
        <dbReference type="HAMAP-Rule" id="MF_00144"/>
    </source>
</evidence>
<proteinExistence type="inferred from homology"/>
<comment type="function">
    <text evidence="1">Catalyzes the 2-thiolation of uridine at the wobble position (U34) of tRNA, leading to the formation of s(2)U34.</text>
</comment>
<comment type="catalytic activity">
    <reaction evidence="1">
        <text>S-sulfanyl-L-cysteinyl-[protein] + uridine(34) in tRNA + AH2 + ATP = 2-thiouridine(34) in tRNA + L-cysteinyl-[protein] + A + AMP + diphosphate + H(+)</text>
        <dbReference type="Rhea" id="RHEA:47032"/>
        <dbReference type="Rhea" id="RHEA-COMP:10131"/>
        <dbReference type="Rhea" id="RHEA-COMP:11726"/>
        <dbReference type="Rhea" id="RHEA-COMP:11727"/>
        <dbReference type="Rhea" id="RHEA-COMP:11728"/>
        <dbReference type="ChEBI" id="CHEBI:13193"/>
        <dbReference type="ChEBI" id="CHEBI:15378"/>
        <dbReference type="ChEBI" id="CHEBI:17499"/>
        <dbReference type="ChEBI" id="CHEBI:29950"/>
        <dbReference type="ChEBI" id="CHEBI:30616"/>
        <dbReference type="ChEBI" id="CHEBI:33019"/>
        <dbReference type="ChEBI" id="CHEBI:61963"/>
        <dbReference type="ChEBI" id="CHEBI:65315"/>
        <dbReference type="ChEBI" id="CHEBI:87170"/>
        <dbReference type="ChEBI" id="CHEBI:456215"/>
        <dbReference type="EC" id="2.8.1.13"/>
    </reaction>
</comment>
<comment type="subcellular location">
    <subcellularLocation>
        <location evidence="1">Cytoplasm</location>
    </subcellularLocation>
</comment>
<comment type="similarity">
    <text evidence="1">Belongs to the MnmA/TRMU family.</text>
</comment>
<feature type="chain" id="PRO_1000203306" description="tRNA-specific 2-thiouridylase MnmA">
    <location>
        <begin position="1"/>
        <end position="358"/>
    </location>
</feature>
<feature type="region of interest" description="Interaction with tRNA" evidence="1">
    <location>
        <begin position="149"/>
        <end position="151"/>
    </location>
</feature>
<feature type="region of interest" description="Interaction with tRNA" evidence="1">
    <location>
        <begin position="305"/>
        <end position="306"/>
    </location>
</feature>
<feature type="active site" description="Nucleophile" evidence="1">
    <location>
        <position position="102"/>
    </location>
</feature>
<feature type="active site" description="Cysteine persulfide intermediate" evidence="1">
    <location>
        <position position="199"/>
    </location>
</feature>
<feature type="binding site" evidence="1">
    <location>
        <begin position="7"/>
        <end position="14"/>
    </location>
    <ligand>
        <name>ATP</name>
        <dbReference type="ChEBI" id="CHEBI:30616"/>
    </ligand>
</feature>
<feature type="binding site" evidence="1">
    <location>
        <position position="33"/>
    </location>
    <ligand>
        <name>ATP</name>
        <dbReference type="ChEBI" id="CHEBI:30616"/>
    </ligand>
</feature>
<feature type="binding site" evidence="1">
    <location>
        <position position="126"/>
    </location>
    <ligand>
        <name>ATP</name>
        <dbReference type="ChEBI" id="CHEBI:30616"/>
    </ligand>
</feature>
<feature type="site" description="Interaction with tRNA" evidence="1">
    <location>
        <position position="127"/>
    </location>
</feature>
<feature type="site" description="Interaction with tRNA" evidence="1">
    <location>
        <position position="338"/>
    </location>
</feature>
<feature type="disulfide bond" description="Alternate" evidence="1">
    <location>
        <begin position="102"/>
        <end position="199"/>
    </location>
</feature>
<sequence length="358" mass="40338">MDRVLVAMSGGVDSSVTAALLKEQGYEVIGGTMEIFPDYEQPPLDEGGCCSLSSIEDARRVAHHIGIRHYTFNLKKVFEEEVINNFVNEYKNARTPNPCVVCNNEIKFRSLLKKALELDADYIATGHYAIVEHNVNGKHLLKKAKDVDKDQTYMLYGLTQFQLSHTLMPLGNYTKQEVRQMAKDFGFRIHNKPESQEICFVPDNNYTRFLDENYPGLGKPGPVMDTDGNILGKHKGLHHYTIGQRRGLGISLGYPVYVVKLDREKNAVIIGPEEEVYSKSLIANKVNWISIDKLTEPIKVTARIRYNSPESHAKIYPVNDNEVKVVFDKKQRAVTPGQSVVFYDGKVVVGGGIIKENF</sequence>
<gene>
    <name evidence="1" type="primary">mnmA</name>
    <name type="ordered locus">Hore_08900</name>
</gene>
<organism>
    <name type="scientific">Halothermothrix orenii (strain H 168 / OCM 544 / DSM 9562)</name>
    <dbReference type="NCBI Taxonomy" id="373903"/>
    <lineage>
        <taxon>Bacteria</taxon>
        <taxon>Bacillati</taxon>
        <taxon>Bacillota</taxon>
        <taxon>Clostridia</taxon>
        <taxon>Halanaerobiales</taxon>
        <taxon>Halothermotrichaceae</taxon>
        <taxon>Halothermothrix</taxon>
    </lineage>
</organism>
<name>MNMA_HALOH</name>